<accession>C5CSE2</accession>
<keyword id="KW-0012">Acyltransferase</keyword>
<keyword id="KW-0963">Cytoplasm</keyword>
<keyword id="KW-0275">Fatty acid biosynthesis</keyword>
<keyword id="KW-0276">Fatty acid metabolism</keyword>
<keyword id="KW-0444">Lipid biosynthesis</keyword>
<keyword id="KW-0443">Lipid metabolism</keyword>
<keyword id="KW-0511">Multifunctional enzyme</keyword>
<keyword id="KW-0808">Transferase</keyword>
<protein>
    <recommendedName>
        <fullName evidence="1">Beta-ketoacyl-[acyl-carrier-protein] synthase III</fullName>
        <shortName evidence="1">Beta-ketoacyl-ACP synthase III</shortName>
        <shortName evidence="1">KAS III</shortName>
        <ecNumber evidence="1">2.3.1.180</ecNumber>
    </recommendedName>
    <alternativeName>
        <fullName evidence="1">3-oxoacyl-[acyl-carrier-protein] synthase 3</fullName>
    </alternativeName>
    <alternativeName>
        <fullName evidence="1">3-oxoacyl-[acyl-carrier-protein] synthase III</fullName>
    </alternativeName>
</protein>
<gene>
    <name evidence="1" type="primary">fabH</name>
    <name type="ordered locus">Vapar_1389</name>
</gene>
<name>FABH_VARPS</name>
<evidence type="ECO:0000255" key="1">
    <source>
        <dbReference type="HAMAP-Rule" id="MF_01815"/>
    </source>
</evidence>
<organism>
    <name type="scientific">Variovorax paradoxus (strain S110)</name>
    <dbReference type="NCBI Taxonomy" id="543728"/>
    <lineage>
        <taxon>Bacteria</taxon>
        <taxon>Pseudomonadati</taxon>
        <taxon>Pseudomonadota</taxon>
        <taxon>Betaproteobacteria</taxon>
        <taxon>Burkholderiales</taxon>
        <taxon>Comamonadaceae</taxon>
        <taxon>Variovorax</taxon>
    </lineage>
</organism>
<sequence>MSSYSRITGTGSYLPPRRVTNDDLAKELATRGIETSDQWIVERTGIHARHFAAPEVTSSDLALEAARHALEAAGRKAEDIDLIIVATSTPDMVFPSSAAILQNKLGVAGCPAFDVQAVCSGFVYALTVADAMIRTGTARCALVVGAEVFSRILDFNDRTTCVLFGDGAGAVVLEASEEPGILASDLHADGKHVGILCVPGHVSGGNVLGTPLLHMDGQAVFKLAVRVLEDAARATLAKAGKTEADIDWLIPHQANIRIMEGTAKKLKLPREKLIVTVNEHGNTSAASIPLALDEAVRSGKVKKGETVMLEGVGGGFTWGAVLLNL</sequence>
<proteinExistence type="inferred from homology"/>
<comment type="function">
    <text evidence="1">Catalyzes the condensation reaction of fatty acid synthesis by the addition to an acyl acceptor of two carbons from malonyl-ACP. Catalyzes the first condensation reaction which initiates fatty acid synthesis and may therefore play a role in governing the total rate of fatty acid production. Possesses both acetoacetyl-ACP synthase and acetyl transacylase activities. Its substrate specificity determines the biosynthesis of branched-chain and/or straight-chain of fatty acids.</text>
</comment>
<comment type="catalytic activity">
    <reaction evidence="1">
        <text>malonyl-[ACP] + acetyl-CoA + H(+) = 3-oxobutanoyl-[ACP] + CO2 + CoA</text>
        <dbReference type="Rhea" id="RHEA:12080"/>
        <dbReference type="Rhea" id="RHEA-COMP:9623"/>
        <dbReference type="Rhea" id="RHEA-COMP:9625"/>
        <dbReference type="ChEBI" id="CHEBI:15378"/>
        <dbReference type="ChEBI" id="CHEBI:16526"/>
        <dbReference type="ChEBI" id="CHEBI:57287"/>
        <dbReference type="ChEBI" id="CHEBI:57288"/>
        <dbReference type="ChEBI" id="CHEBI:78449"/>
        <dbReference type="ChEBI" id="CHEBI:78450"/>
        <dbReference type="EC" id="2.3.1.180"/>
    </reaction>
</comment>
<comment type="pathway">
    <text evidence="1">Lipid metabolism; fatty acid biosynthesis.</text>
</comment>
<comment type="subunit">
    <text evidence="1">Homodimer.</text>
</comment>
<comment type="subcellular location">
    <subcellularLocation>
        <location evidence="1">Cytoplasm</location>
    </subcellularLocation>
</comment>
<comment type="domain">
    <text evidence="1">The last Arg residue of the ACP-binding site is essential for the weak association between ACP/AcpP and FabH.</text>
</comment>
<comment type="similarity">
    <text evidence="1">Belongs to the thiolase-like superfamily. FabH family.</text>
</comment>
<dbReference type="EC" id="2.3.1.180" evidence="1"/>
<dbReference type="EMBL" id="CP001635">
    <property type="protein sequence ID" value="ACS18040.1"/>
    <property type="molecule type" value="Genomic_DNA"/>
</dbReference>
<dbReference type="SMR" id="C5CSE2"/>
<dbReference type="STRING" id="543728.Vapar_1389"/>
<dbReference type="KEGG" id="vap:Vapar_1389"/>
<dbReference type="eggNOG" id="COG0332">
    <property type="taxonomic scope" value="Bacteria"/>
</dbReference>
<dbReference type="HOGENOM" id="CLU_039592_3_1_4"/>
<dbReference type="OrthoDB" id="9815506at2"/>
<dbReference type="UniPathway" id="UPA00094"/>
<dbReference type="GO" id="GO:0005737">
    <property type="term" value="C:cytoplasm"/>
    <property type="evidence" value="ECO:0007669"/>
    <property type="project" value="UniProtKB-SubCell"/>
</dbReference>
<dbReference type="GO" id="GO:0004315">
    <property type="term" value="F:3-oxoacyl-[acyl-carrier-protein] synthase activity"/>
    <property type="evidence" value="ECO:0007669"/>
    <property type="project" value="InterPro"/>
</dbReference>
<dbReference type="GO" id="GO:0033818">
    <property type="term" value="F:beta-ketoacyl-acyl-carrier-protein synthase III activity"/>
    <property type="evidence" value="ECO:0007669"/>
    <property type="project" value="UniProtKB-UniRule"/>
</dbReference>
<dbReference type="GO" id="GO:0006633">
    <property type="term" value="P:fatty acid biosynthetic process"/>
    <property type="evidence" value="ECO:0007669"/>
    <property type="project" value="UniProtKB-UniRule"/>
</dbReference>
<dbReference type="GO" id="GO:0044550">
    <property type="term" value="P:secondary metabolite biosynthetic process"/>
    <property type="evidence" value="ECO:0007669"/>
    <property type="project" value="TreeGrafter"/>
</dbReference>
<dbReference type="CDD" id="cd00830">
    <property type="entry name" value="KAS_III"/>
    <property type="match status" value="1"/>
</dbReference>
<dbReference type="FunFam" id="3.40.47.10:FF:000004">
    <property type="entry name" value="3-oxoacyl-[acyl-carrier-protein] synthase 3"/>
    <property type="match status" value="1"/>
</dbReference>
<dbReference type="Gene3D" id="3.40.47.10">
    <property type="match status" value="1"/>
</dbReference>
<dbReference type="HAMAP" id="MF_01815">
    <property type="entry name" value="FabH"/>
    <property type="match status" value="1"/>
</dbReference>
<dbReference type="InterPro" id="IPR013747">
    <property type="entry name" value="ACP_syn_III_C"/>
</dbReference>
<dbReference type="InterPro" id="IPR013751">
    <property type="entry name" value="ACP_syn_III_N"/>
</dbReference>
<dbReference type="InterPro" id="IPR004655">
    <property type="entry name" value="FabH"/>
</dbReference>
<dbReference type="InterPro" id="IPR016039">
    <property type="entry name" value="Thiolase-like"/>
</dbReference>
<dbReference type="NCBIfam" id="TIGR00747">
    <property type="entry name" value="fabH"/>
    <property type="match status" value="1"/>
</dbReference>
<dbReference type="NCBIfam" id="NF006829">
    <property type="entry name" value="PRK09352.1"/>
    <property type="match status" value="1"/>
</dbReference>
<dbReference type="PANTHER" id="PTHR34069">
    <property type="entry name" value="3-OXOACYL-[ACYL-CARRIER-PROTEIN] SYNTHASE 3"/>
    <property type="match status" value="1"/>
</dbReference>
<dbReference type="PANTHER" id="PTHR34069:SF2">
    <property type="entry name" value="BETA-KETOACYL-[ACYL-CARRIER-PROTEIN] SYNTHASE III"/>
    <property type="match status" value="1"/>
</dbReference>
<dbReference type="Pfam" id="PF08545">
    <property type="entry name" value="ACP_syn_III"/>
    <property type="match status" value="1"/>
</dbReference>
<dbReference type="Pfam" id="PF08541">
    <property type="entry name" value="ACP_syn_III_C"/>
    <property type="match status" value="1"/>
</dbReference>
<dbReference type="SUPFAM" id="SSF53901">
    <property type="entry name" value="Thiolase-like"/>
    <property type="match status" value="1"/>
</dbReference>
<reference key="1">
    <citation type="journal article" date="2011" name="J. Bacteriol.">
        <title>Complete genome sequence of the metabolically versatile plant growth-promoting endophyte, Variovorax paradoxus S110.</title>
        <authorList>
            <person name="Han J.I."/>
            <person name="Choi H.K."/>
            <person name="Lee S.W."/>
            <person name="Orwin P.M."/>
            <person name="Kim J."/>
            <person name="Laroe S.L."/>
            <person name="Kim T.G."/>
            <person name="O'Neil J."/>
            <person name="Leadbetter J.R."/>
            <person name="Lee S.Y."/>
            <person name="Hur C.G."/>
            <person name="Spain J.C."/>
            <person name="Ovchinnikova G."/>
            <person name="Goodwin L."/>
            <person name="Han C."/>
        </authorList>
    </citation>
    <scope>NUCLEOTIDE SEQUENCE [LARGE SCALE GENOMIC DNA]</scope>
    <source>
        <strain>S110</strain>
    </source>
</reference>
<feature type="chain" id="PRO_1000216002" description="Beta-ketoacyl-[acyl-carrier-protein] synthase III">
    <location>
        <begin position="1"/>
        <end position="325"/>
    </location>
</feature>
<feature type="region of interest" description="ACP-binding" evidence="1">
    <location>
        <begin position="253"/>
        <end position="257"/>
    </location>
</feature>
<feature type="active site" evidence="1">
    <location>
        <position position="119"/>
    </location>
</feature>
<feature type="active site" evidence="1">
    <location>
        <position position="252"/>
    </location>
</feature>
<feature type="active site" evidence="1">
    <location>
        <position position="282"/>
    </location>
</feature>